<reference key="1">
    <citation type="journal article" date="1990" name="J. Biol. Chem.">
        <title>Cloning, sequence analysis, and expression of the bacteriophage T4 cd gene.</title>
        <authorList>
            <person name="Maley G.F."/>
            <person name="Duceman B.W."/>
            <person name="Wang A.-M."/>
            <person name="Martinez J."/>
            <person name="Maley F."/>
        </authorList>
    </citation>
    <scope>NUCLEOTIDE SEQUENCE [GENOMIC DNA]</scope>
</reference>
<reference key="2">
    <citation type="journal article" date="2003" name="Microbiol. Mol. Biol. Rev.">
        <title>Bacteriophage T4 genome.</title>
        <authorList>
            <person name="Miller E.S."/>
            <person name="Kutter E."/>
            <person name="Mosig G."/>
            <person name="Arisaka F."/>
            <person name="Kunisawa T."/>
            <person name="Ruger W."/>
        </authorList>
    </citation>
    <scope>NUCLEOTIDE SEQUENCE [LARGE SCALE GENOMIC DNA]</scope>
</reference>
<reference key="3">
    <citation type="journal article" date="1993" name="J. Biol. Chem.">
        <title>T4-phage deoxycytidylate deaminase is a metalloprotein containing two zinc atoms per subunit.</title>
        <authorList>
            <person name="Moore J.T."/>
            <person name="Silversmith R.E."/>
            <person name="Maley G.F."/>
            <person name="Maley F."/>
        </authorList>
    </citation>
    <scope>ZINC-BINDING</scope>
</reference>
<reference key="4">
    <citation type="journal article" date="2004" name="Biochemistry">
        <title>Three-dimensional structure of the R115E mutant of T4-bacteriophage 2'-deoxycytidylate deaminase.</title>
        <authorList>
            <person name="Almog R."/>
            <person name="Maley F."/>
            <person name="Maley G.F."/>
            <person name="Maccoll R."/>
            <person name="Van Roey P."/>
        </authorList>
    </citation>
    <scope>X-RAY CRYSTALLOGRAPHY (2.2 ANGSTROMS) OF MUTANT GLU-115 IN COMPLEX WITH SUBSTRATE ANALOG AND ZINC IONS</scope>
</reference>
<evidence type="ECO:0000250" key="1"/>
<evidence type="ECO:0000255" key="2">
    <source>
        <dbReference type="PROSITE-ProRule" id="PRU01083"/>
    </source>
</evidence>
<evidence type="ECO:0000269" key="3">
    <source>
    </source>
</evidence>
<evidence type="ECO:0000305" key="4"/>
<evidence type="ECO:0007829" key="5">
    <source>
        <dbReference type="PDB" id="1VQ2"/>
    </source>
</evidence>
<dbReference type="EC" id="3.5.4.12"/>
<dbReference type="EMBL" id="J05172">
    <property type="protein sequence ID" value="AAA32489.1"/>
    <property type="molecule type" value="Genomic_DNA"/>
</dbReference>
<dbReference type="EMBL" id="AF158101">
    <property type="protein sequence ID" value="AAD42546.1"/>
    <property type="molecule type" value="Genomic_DNA"/>
</dbReference>
<dbReference type="PIR" id="JN0081">
    <property type="entry name" value="DUBPT4"/>
</dbReference>
<dbReference type="RefSeq" id="NP_049828.1">
    <property type="nucleotide sequence ID" value="NC_000866.4"/>
</dbReference>
<dbReference type="PDB" id="1VQ2">
    <property type="method" value="X-ray"/>
    <property type="resolution" value="2.20 A"/>
    <property type="chains" value="A=1-193"/>
</dbReference>
<dbReference type="PDBsum" id="1VQ2"/>
<dbReference type="SMR" id="P16006"/>
<dbReference type="DrugBank" id="DB04280">
    <property type="generic name" value="3,4-Dihydro-2'-deoxyuridine-5'-monophosphate"/>
</dbReference>
<dbReference type="GeneID" id="1258669"/>
<dbReference type="KEGG" id="vg:1258669"/>
<dbReference type="OrthoDB" id="10605at10239"/>
<dbReference type="EvolutionaryTrace" id="P16006"/>
<dbReference type="Proteomes" id="UP000009087">
    <property type="component" value="Segment"/>
</dbReference>
<dbReference type="GO" id="GO:0004132">
    <property type="term" value="F:dCMP deaminase activity"/>
    <property type="evidence" value="ECO:0007669"/>
    <property type="project" value="UniProtKB-EC"/>
</dbReference>
<dbReference type="GO" id="GO:0008270">
    <property type="term" value="F:zinc ion binding"/>
    <property type="evidence" value="ECO:0007669"/>
    <property type="project" value="InterPro"/>
</dbReference>
<dbReference type="GO" id="GO:0009972">
    <property type="term" value="P:cytidine deamination"/>
    <property type="evidence" value="ECO:0007669"/>
    <property type="project" value="TreeGrafter"/>
</dbReference>
<dbReference type="GO" id="GO:0009165">
    <property type="term" value="P:nucleotide biosynthetic process"/>
    <property type="evidence" value="ECO:0007669"/>
    <property type="project" value="UniProtKB-KW"/>
</dbReference>
<dbReference type="GO" id="GO:0006220">
    <property type="term" value="P:pyrimidine nucleotide metabolic process"/>
    <property type="evidence" value="ECO:0007669"/>
    <property type="project" value="InterPro"/>
</dbReference>
<dbReference type="CDD" id="cd01286">
    <property type="entry name" value="deoxycytidylate_deaminase"/>
    <property type="match status" value="1"/>
</dbReference>
<dbReference type="Gene3D" id="3.40.140.10">
    <property type="entry name" value="Cytidine Deaminase, domain 2"/>
    <property type="match status" value="1"/>
</dbReference>
<dbReference type="InterPro" id="IPR016192">
    <property type="entry name" value="APOBEC/CMP_deaminase_Zn-bd"/>
</dbReference>
<dbReference type="InterPro" id="IPR002125">
    <property type="entry name" value="CMP_dCMP_dom"/>
</dbReference>
<dbReference type="InterPro" id="IPR016193">
    <property type="entry name" value="Cytidine_deaminase-like"/>
</dbReference>
<dbReference type="InterPro" id="IPR016473">
    <property type="entry name" value="dCMP_deaminase"/>
</dbReference>
<dbReference type="InterPro" id="IPR015517">
    <property type="entry name" value="dCMP_deaminase-rel"/>
</dbReference>
<dbReference type="InterPro" id="IPR035105">
    <property type="entry name" value="Deoxycytidylate_deaminase_dom"/>
</dbReference>
<dbReference type="PANTHER" id="PTHR11086:SF18">
    <property type="entry name" value="DEOXYCYTIDYLATE DEAMINASE"/>
    <property type="match status" value="1"/>
</dbReference>
<dbReference type="PANTHER" id="PTHR11086">
    <property type="entry name" value="DEOXYCYTIDYLATE DEAMINASE-RELATED"/>
    <property type="match status" value="1"/>
</dbReference>
<dbReference type="Pfam" id="PF00383">
    <property type="entry name" value="dCMP_cyt_deam_1"/>
    <property type="match status" value="1"/>
</dbReference>
<dbReference type="PIRSF" id="PIRSF006019">
    <property type="entry name" value="dCMP_deaminase"/>
    <property type="match status" value="1"/>
</dbReference>
<dbReference type="SUPFAM" id="SSF53927">
    <property type="entry name" value="Cytidine deaminase-like"/>
    <property type="match status" value="1"/>
</dbReference>
<dbReference type="PROSITE" id="PS00903">
    <property type="entry name" value="CYT_DCMP_DEAMINASES_1"/>
    <property type="match status" value="1"/>
</dbReference>
<dbReference type="PROSITE" id="PS51747">
    <property type="entry name" value="CYT_DCMP_DEAMINASES_2"/>
    <property type="match status" value="1"/>
</dbReference>
<keyword id="KW-0002">3D-structure</keyword>
<keyword id="KW-0021">Allosteric enzyme</keyword>
<keyword id="KW-0378">Hydrolase</keyword>
<keyword id="KW-0479">Metal-binding</keyword>
<keyword id="KW-0545">Nucleotide biosynthesis</keyword>
<keyword id="KW-1185">Reference proteome</keyword>
<keyword id="KW-0862">Zinc</keyword>
<proteinExistence type="evidence at protein level"/>
<sequence>MKASTVLQIAYLVSQESKCCSWKVGAVIEKNGRIISTGYNGSPAGGVNCCDYAAEQGWLLNKPKHAIIQGHKPECVSFGSTDRFVLAKEHRSAHSEWSSKNEIHAELNAILFAARNGSSIEGATMYVTLSPCPDCAKAIAQSGIKKLVYCETYDKNKPGWDDILRNAGIEVFNVPKKNLNKLNWENINEFCGE</sequence>
<name>DCTD_BPT4</name>
<comment type="function">
    <text>Supplies the nucleotide substrate for thymidylate synthetase.</text>
</comment>
<comment type="catalytic activity">
    <reaction>
        <text>dCMP + H2O + H(+) = dUMP + NH4(+)</text>
        <dbReference type="Rhea" id="RHEA:22924"/>
        <dbReference type="ChEBI" id="CHEBI:15377"/>
        <dbReference type="ChEBI" id="CHEBI:15378"/>
        <dbReference type="ChEBI" id="CHEBI:28938"/>
        <dbReference type="ChEBI" id="CHEBI:57566"/>
        <dbReference type="ChEBI" id="CHEBI:246422"/>
        <dbReference type="EC" id="3.5.4.12"/>
    </reaction>
</comment>
<comment type="cofactor">
    <cofactor>
        <name>Zn(2+)</name>
        <dbReference type="ChEBI" id="CHEBI:29105"/>
    </cofactor>
    <text>Binds 2 Zn(2+) ions per subunit.</text>
</comment>
<comment type="activity regulation">
    <text>Allosteric enzyme whose activity is greatly influenced by the end products of its metabolic pathway, dCTP and dTTP.</text>
</comment>
<comment type="subunit">
    <text evidence="3">Homohexamer.</text>
</comment>
<comment type="similarity">
    <text evidence="4">Belongs to the cytidine and deoxycytidylate deaminase family.</text>
</comment>
<feature type="chain" id="PRO_0000171699" description="Deoxycytidylate deaminase">
    <location>
        <begin position="1"/>
        <end position="193"/>
    </location>
</feature>
<feature type="domain" description="CMP/dCMP-type deaminase" evidence="2">
    <location>
        <begin position="1"/>
        <end position="171"/>
    </location>
</feature>
<feature type="active site" description="Proton donor" evidence="1">
    <location>
        <position position="106"/>
    </location>
</feature>
<feature type="binding site">
    <location>
        <position position="19"/>
    </location>
    <ligand>
        <name>Zn(2+)</name>
        <dbReference type="ChEBI" id="CHEBI:29105"/>
        <label>1</label>
        <note>structural</note>
    </ligand>
</feature>
<feature type="binding site">
    <location>
        <position position="49"/>
    </location>
    <ligand>
        <name>Zn(2+)</name>
        <dbReference type="ChEBI" id="CHEBI:29105"/>
        <label>1</label>
        <note>structural</note>
    </ligand>
</feature>
<feature type="binding site">
    <location>
        <position position="94"/>
    </location>
    <ligand>
        <name>Zn(2+)</name>
        <dbReference type="ChEBI" id="CHEBI:29105"/>
        <label>1</label>
        <note>structural</note>
    </ligand>
</feature>
<feature type="binding site">
    <location>
        <position position="102"/>
    </location>
    <ligand>
        <name>Zn(2+)</name>
        <dbReference type="ChEBI" id="CHEBI:29105"/>
        <label>1</label>
        <note>structural</note>
    </ligand>
</feature>
<feature type="binding site">
    <location>
        <position position="104"/>
    </location>
    <ligand>
        <name>Zn(2+)</name>
        <dbReference type="ChEBI" id="CHEBI:29105"/>
        <label>2</label>
        <note>catalytic</note>
    </ligand>
</feature>
<feature type="binding site">
    <location>
        <position position="132"/>
    </location>
    <ligand>
        <name>Zn(2+)</name>
        <dbReference type="ChEBI" id="CHEBI:29105"/>
        <label>2</label>
        <note>catalytic</note>
    </ligand>
</feature>
<feature type="binding site">
    <location>
        <position position="135"/>
    </location>
    <ligand>
        <name>Zn(2+)</name>
        <dbReference type="ChEBI" id="CHEBI:29105"/>
        <label>2</label>
        <note>catalytic</note>
    </ligand>
</feature>
<feature type="binding site">
    <location>
        <position position="153"/>
    </location>
    <ligand>
        <name>substrate</name>
    </ligand>
</feature>
<feature type="helix" evidence="5">
    <location>
        <begin position="3"/>
        <end position="14"/>
    </location>
</feature>
<feature type="strand" evidence="5">
    <location>
        <begin position="20"/>
        <end position="22"/>
    </location>
</feature>
<feature type="strand" evidence="5">
    <location>
        <begin position="25"/>
        <end position="30"/>
    </location>
</feature>
<feature type="strand" evidence="5">
    <location>
        <begin position="33"/>
        <end position="39"/>
    </location>
</feature>
<feature type="helix" evidence="5">
    <location>
        <begin position="49"/>
        <end position="56"/>
    </location>
</feature>
<feature type="strand" evidence="5">
    <location>
        <begin position="59"/>
        <end position="61"/>
    </location>
</feature>
<feature type="strand" evidence="5">
    <location>
        <begin position="84"/>
        <end position="86"/>
    </location>
</feature>
<feature type="helix" evidence="5">
    <location>
        <begin position="88"/>
        <end position="90"/>
    </location>
</feature>
<feature type="helix" evidence="5">
    <location>
        <begin position="91"/>
        <end position="101"/>
    </location>
</feature>
<feature type="helix" evidence="5">
    <location>
        <begin position="105"/>
        <end position="116"/>
    </location>
</feature>
<feature type="strand" evidence="5">
    <location>
        <begin position="124"/>
        <end position="129"/>
    </location>
</feature>
<feature type="helix" evidence="5">
    <location>
        <begin position="133"/>
        <end position="141"/>
    </location>
</feature>
<feature type="strand" evidence="5">
    <location>
        <begin position="146"/>
        <end position="151"/>
    </location>
</feature>
<feature type="turn" evidence="5">
    <location>
        <begin position="158"/>
        <end position="161"/>
    </location>
</feature>
<feature type="helix" evidence="5">
    <location>
        <begin position="162"/>
        <end position="166"/>
    </location>
</feature>
<feature type="strand" evidence="5">
    <location>
        <begin position="170"/>
        <end position="173"/>
    </location>
</feature>
<feature type="helix" evidence="5">
    <location>
        <begin position="176"/>
        <end position="178"/>
    </location>
</feature>
<feature type="helix" evidence="5">
    <location>
        <begin position="184"/>
        <end position="186"/>
    </location>
</feature>
<protein>
    <recommendedName>
        <fullName>Deoxycytidylate deaminase</fullName>
        <ecNumber>3.5.4.12</ecNumber>
    </recommendedName>
    <alternativeName>
        <fullName>dCMP deaminase</fullName>
        <shortName>dCD</shortName>
    </alternativeName>
</protein>
<gene>
    <name type="primary">CD</name>
</gene>
<organismHost>
    <name type="scientific">Escherichia coli</name>
    <dbReference type="NCBI Taxonomy" id="562"/>
</organismHost>
<accession>P16006</accession>
<organism>
    <name type="scientific">Enterobacteria phage T4</name>
    <name type="common">Bacteriophage T4</name>
    <dbReference type="NCBI Taxonomy" id="10665"/>
    <lineage>
        <taxon>Viruses</taxon>
        <taxon>Duplodnaviria</taxon>
        <taxon>Heunggongvirae</taxon>
        <taxon>Uroviricota</taxon>
        <taxon>Caudoviricetes</taxon>
        <taxon>Straboviridae</taxon>
        <taxon>Tevenvirinae</taxon>
        <taxon>Tequatrovirus</taxon>
    </lineage>
</organism>